<evidence type="ECO:0000255" key="1">
    <source>
        <dbReference type="HAMAP-Rule" id="MF_00075"/>
    </source>
</evidence>
<dbReference type="EMBL" id="AL590842">
    <property type="protein sequence ID" value="CAL20022.1"/>
    <property type="molecule type" value="Genomic_DNA"/>
</dbReference>
<dbReference type="EMBL" id="AE009952">
    <property type="protein sequence ID" value="AAM86358.1"/>
    <property type="molecule type" value="Genomic_DNA"/>
</dbReference>
<dbReference type="EMBL" id="AE017042">
    <property type="protein sequence ID" value="AAS61466.1"/>
    <property type="molecule type" value="Genomic_DNA"/>
</dbReference>
<dbReference type="PIR" id="AD0167">
    <property type="entry name" value="AD0167"/>
</dbReference>
<dbReference type="RefSeq" id="WP_002211347.1">
    <property type="nucleotide sequence ID" value="NZ_WUCM01000096.1"/>
</dbReference>
<dbReference type="RefSeq" id="YP_002346393.1">
    <property type="nucleotide sequence ID" value="NC_003143.1"/>
</dbReference>
<dbReference type="SMR" id="P65115"/>
<dbReference type="STRING" id="214092.YPO1370"/>
<dbReference type="PaxDb" id="214092-YPO1370"/>
<dbReference type="DNASU" id="1147754"/>
<dbReference type="EnsemblBacteria" id="AAS61466">
    <property type="protein sequence ID" value="AAS61466"/>
    <property type="gene ID" value="YP_1223"/>
</dbReference>
<dbReference type="GeneID" id="98387575"/>
<dbReference type="KEGG" id="ype:YPO1370"/>
<dbReference type="KEGG" id="ypk:y2807"/>
<dbReference type="KEGG" id="ypm:YP_1223"/>
<dbReference type="PATRIC" id="fig|214092.21.peg.1691"/>
<dbReference type="eggNOG" id="COG0361">
    <property type="taxonomic scope" value="Bacteria"/>
</dbReference>
<dbReference type="HOGENOM" id="CLU_151267_1_0_6"/>
<dbReference type="OMA" id="EGHQCLC"/>
<dbReference type="OrthoDB" id="9803250at2"/>
<dbReference type="Proteomes" id="UP000000815">
    <property type="component" value="Chromosome"/>
</dbReference>
<dbReference type="Proteomes" id="UP000001019">
    <property type="component" value="Chromosome"/>
</dbReference>
<dbReference type="Proteomes" id="UP000002490">
    <property type="component" value="Chromosome"/>
</dbReference>
<dbReference type="GO" id="GO:0005829">
    <property type="term" value="C:cytosol"/>
    <property type="evidence" value="ECO:0000318"/>
    <property type="project" value="GO_Central"/>
</dbReference>
<dbReference type="GO" id="GO:0043022">
    <property type="term" value="F:ribosome binding"/>
    <property type="evidence" value="ECO:0000318"/>
    <property type="project" value="GO_Central"/>
</dbReference>
<dbReference type="GO" id="GO:0019843">
    <property type="term" value="F:rRNA binding"/>
    <property type="evidence" value="ECO:0007669"/>
    <property type="project" value="UniProtKB-UniRule"/>
</dbReference>
<dbReference type="GO" id="GO:0003743">
    <property type="term" value="F:translation initiation factor activity"/>
    <property type="evidence" value="ECO:0007669"/>
    <property type="project" value="UniProtKB-UniRule"/>
</dbReference>
<dbReference type="CDD" id="cd04451">
    <property type="entry name" value="S1_IF1"/>
    <property type="match status" value="1"/>
</dbReference>
<dbReference type="FunFam" id="2.40.50.140:FF:000002">
    <property type="entry name" value="Translation initiation factor IF-1"/>
    <property type="match status" value="1"/>
</dbReference>
<dbReference type="Gene3D" id="2.40.50.140">
    <property type="entry name" value="Nucleic acid-binding proteins"/>
    <property type="match status" value="1"/>
</dbReference>
<dbReference type="HAMAP" id="MF_00075">
    <property type="entry name" value="IF_1"/>
    <property type="match status" value="1"/>
</dbReference>
<dbReference type="InterPro" id="IPR012340">
    <property type="entry name" value="NA-bd_OB-fold"/>
</dbReference>
<dbReference type="InterPro" id="IPR006196">
    <property type="entry name" value="RNA-binding_domain_S1_IF1"/>
</dbReference>
<dbReference type="InterPro" id="IPR003029">
    <property type="entry name" value="S1_domain"/>
</dbReference>
<dbReference type="InterPro" id="IPR004368">
    <property type="entry name" value="TIF_IF1"/>
</dbReference>
<dbReference type="NCBIfam" id="TIGR00008">
    <property type="entry name" value="infA"/>
    <property type="match status" value="1"/>
</dbReference>
<dbReference type="PANTHER" id="PTHR33370">
    <property type="entry name" value="TRANSLATION INITIATION FACTOR IF-1, CHLOROPLASTIC"/>
    <property type="match status" value="1"/>
</dbReference>
<dbReference type="PANTHER" id="PTHR33370:SF1">
    <property type="entry name" value="TRANSLATION INITIATION FACTOR IF-1, CHLOROPLASTIC"/>
    <property type="match status" value="1"/>
</dbReference>
<dbReference type="Pfam" id="PF01176">
    <property type="entry name" value="eIF-1a"/>
    <property type="match status" value="1"/>
</dbReference>
<dbReference type="SMART" id="SM00316">
    <property type="entry name" value="S1"/>
    <property type="match status" value="1"/>
</dbReference>
<dbReference type="SUPFAM" id="SSF50249">
    <property type="entry name" value="Nucleic acid-binding proteins"/>
    <property type="match status" value="1"/>
</dbReference>
<dbReference type="PROSITE" id="PS50832">
    <property type="entry name" value="S1_IF1_TYPE"/>
    <property type="match status" value="1"/>
</dbReference>
<feature type="chain" id="PRO_0000095913" description="Translation initiation factor IF-1">
    <location>
        <begin position="1"/>
        <end position="72"/>
    </location>
</feature>
<feature type="domain" description="S1-like" evidence="1">
    <location>
        <begin position="1"/>
        <end position="72"/>
    </location>
</feature>
<name>IF1_YERPE</name>
<organism>
    <name type="scientific">Yersinia pestis</name>
    <dbReference type="NCBI Taxonomy" id="632"/>
    <lineage>
        <taxon>Bacteria</taxon>
        <taxon>Pseudomonadati</taxon>
        <taxon>Pseudomonadota</taxon>
        <taxon>Gammaproteobacteria</taxon>
        <taxon>Enterobacterales</taxon>
        <taxon>Yersiniaceae</taxon>
        <taxon>Yersinia</taxon>
    </lineage>
</organism>
<protein>
    <recommendedName>
        <fullName evidence="1">Translation initiation factor IF-1</fullName>
    </recommendedName>
</protein>
<comment type="function">
    <text evidence="1">One of the essential components for the initiation of protein synthesis. Stabilizes the binding of IF-2 and IF-3 on the 30S subunit to which N-formylmethionyl-tRNA(fMet) subsequently binds. Helps modulate mRNA selection, yielding the 30S pre-initiation complex (PIC). Upon addition of the 50S ribosomal subunit IF-1, IF-2 and IF-3 are released leaving the mature 70S translation initiation complex.</text>
</comment>
<comment type="subunit">
    <text evidence="1">Component of the 30S ribosomal translation pre-initiation complex which assembles on the 30S ribosome in the order IF-2 and IF-3, IF-1 and N-formylmethionyl-tRNA(fMet); mRNA recruitment can occur at any time during PIC assembly.</text>
</comment>
<comment type="subcellular location">
    <subcellularLocation>
        <location evidence="1">Cytoplasm</location>
    </subcellularLocation>
</comment>
<comment type="similarity">
    <text evidence="1">Belongs to the IF-1 family.</text>
</comment>
<reference key="1">
    <citation type="journal article" date="2001" name="Nature">
        <title>Genome sequence of Yersinia pestis, the causative agent of plague.</title>
        <authorList>
            <person name="Parkhill J."/>
            <person name="Wren B.W."/>
            <person name="Thomson N.R."/>
            <person name="Titball R.W."/>
            <person name="Holden M.T.G."/>
            <person name="Prentice M.B."/>
            <person name="Sebaihia M."/>
            <person name="James K.D."/>
            <person name="Churcher C.M."/>
            <person name="Mungall K.L."/>
            <person name="Baker S."/>
            <person name="Basham D."/>
            <person name="Bentley S.D."/>
            <person name="Brooks K."/>
            <person name="Cerdeno-Tarraga A.-M."/>
            <person name="Chillingworth T."/>
            <person name="Cronin A."/>
            <person name="Davies R.M."/>
            <person name="Davis P."/>
            <person name="Dougan G."/>
            <person name="Feltwell T."/>
            <person name="Hamlin N."/>
            <person name="Holroyd S."/>
            <person name="Jagels K."/>
            <person name="Karlyshev A.V."/>
            <person name="Leather S."/>
            <person name="Moule S."/>
            <person name="Oyston P.C.F."/>
            <person name="Quail M.A."/>
            <person name="Rutherford K.M."/>
            <person name="Simmonds M."/>
            <person name="Skelton J."/>
            <person name="Stevens K."/>
            <person name="Whitehead S."/>
            <person name="Barrell B.G."/>
        </authorList>
    </citation>
    <scope>NUCLEOTIDE SEQUENCE [LARGE SCALE GENOMIC DNA]</scope>
    <source>
        <strain>CO-92 / Biovar Orientalis</strain>
    </source>
</reference>
<reference key="2">
    <citation type="journal article" date="2002" name="J. Bacteriol.">
        <title>Genome sequence of Yersinia pestis KIM.</title>
        <authorList>
            <person name="Deng W."/>
            <person name="Burland V."/>
            <person name="Plunkett G. III"/>
            <person name="Boutin A."/>
            <person name="Mayhew G.F."/>
            <person name="Liss P."/>
            <person name="Perna N.T."/>
            <person name="Rose D.J."/>
            <person name="Mau B."/>
            <person name="Zhou S."/>
            <person name="Schwartz D.C."/>
            <person name="Fetherston J.D."/>
            <person name="Lindler L.E."/>
            <person name="Brubaker R.R."/>
            <person name="Plano G.V."/>
            <person name="Straley S.C."/>
            <person name="McDonough K.A."/>
            <person name="Nilles M.L."/>
            <person name="Matson J.S."/>
            <person name="Blattner F.R."/>
            <person name="Perry R.D."/>
        </authorList>
    </citation>
    <scope>NUCLEOTIDE SEQUENCE [LARGE SCALE GENOMIC DNA]</scope>
    <source>
        <strain>KIM10+ / Biovar Mediaevalis</strain>
    </source>
</reference>
<reference key="3">
    <citation type="journal article" date="2004" name="DNA Res.">
        <title>Complete genome sequence of Yersinia pestis strain 91001, an isolate avirulent to humans.</title>
        <authorList>
            <person name="Song Y."/>
            <person name="Tong Z."/>
            <person name="Wang J."/>
            <person name="Wang L."/>
            <person name="Guo Z."/>
            <person name="Han Y."/>
            <person name="Zhang J."/>
            <person name="Pei D."/>
            <person name="Zhou D."/>
            <person name="Qin H."/>
            <person name="Pang X."/>
            <person name="Han Y."/>
            <person name="Zhai J."/>
            <person name="Li M."/>
            <person name="Cui B."/>
            <person name="Qi Z."/>
            <person name="Jin L."/>
            <person name="Dai R."/>
            <person name="Chen F."/>
            <person name="Li S."/>
            <person name="Ye C."/>
            <person name="Du Z."/>
            <person name="Lin W."/>
            <person name="Wang J."/>
            <person name="Yu J."/>
            <person name="Yang H."/>
            <person name="Wang J."/>
            <person name="Huang P."/>
            <person name="Yang R."/>
        </authorList>
    </citation>
    <scope>NUCLEOTIDE SEQUENCE [LARGE SCALE GENOMIC DNA]</scope>
    <source>
        <strain>91001 / Biovar Mediaevalis</strain>
    </source>
</reference>
<accession>P65115</accession>
<accession>Q0WH45</accession>
<accession>Q8ZGD3</accession>
<keyword id="KW-0963">Cytoplasm</keyword>
<keyword id="KW-0396">Initiation factor</keyword>
<keyword id="KW-0648">Protein biosynthesis</keyword>
<keyword id="KW-1185">Reference proteome</keyword>
<keyword id="KW-0694">RNA-binding</keyword>
<keyword id="KW-0699">rRNA-binding</keyword>
<sequence length="72" mass="8236">MAKEDNIEMQGTVLDTLPNTMFRVELENGHVVTAHISGKMRKNYIRILTGDKVTVELTPYDLSKGRIVFRSR</sequence>
<proteinExistence type="inferred from homology"/>
<gene>
    <name evidence="1" type="primary">infA</name>
    <name type="ordered locus">YPO1370</name>
    <name type="ordered locus">y2807</name>
    <name type="ordered locus">YP_1223</name>
</gene>